<comment type="function">
    <text evidence="10 11 12 13 14 15 16 17 18 19">Functions as a scaffold protein implicated in the regulation of a large spectrum of both general and specialized signaling pathways. Involved in several processes such as innate immune response, inflammation and cell growth inhibition, apoptosis, cell survival, angiogenesis, cell migration and maturation. Also plays a role in cell cycle checkpoint control; reduces G1 phase cyclin levels resulting in G0/G1 cell cycle arrest. Mediates signal transduction by receptor-mediated inflammatory signals, such as the tumor necrosis factor (TNF), interferon (IFN) or lipopolysaccharide (LPS). Modulates the balance between phosphatidylinositol 3-kinase (PI3K)-AKT-mediated cell survival and apoptosis stimulated kinase (MAP3K5)-JNK signaling pathways; sequesters both AKT1 and MAP3K5 and counterbalances the activity of each kinase by modulating their phosphorylation status in response to pro-inflammatory stimuli. Acts as a regulator of the endoplasmic reticulum (ER) unfolded protein response (UPR) pathway; specifically involved in transduction of the ER stress-response to the JNK cascade through ERN1. Mediates TNF-alpha-induced apoptosis activation by facilitating dissociation of inhibitor 14-3-3 from MAP3K5; recruits the PP2A phosphatase complex which dephosphorylates MAP3K5 on 'Ser-966', leading to the dissociation of 13-3-3 proteins and activation of the MAP3K5-JNK signaling pathway in endothelial cells. Also mediates TNF/TRAF2-induced MAP3K5-JNK activation, while it inhibits CHUK-NF-kappa-B signaling. Acts a negative regulator in the IFN-gamma-mediated JAK-STAT signaling cascade by inhibiting smooth muscle cell (VSMCs) proliferation and intimal expansion, and thus, prevents graft arteriosclerosis (GA). Acts as a GTPase-activating protein (GAP) for the ADP ribosylation factor 6 (ARF6) and Ras. Promotes hydrolysis of the ARF6-bound GTP and thus, negatively regulates phosphatidylinositol 4,5-bisphosphate (PIP2)-dependent TLR4-TIRAP-MyD88 and NF-kappa-B signaling pathways in endothelial cells in response to lipopolysaccharides (LPS). Binds specifically to phosphatidylinositol 4-phosphate (PtdIns4P) and phosphatidylinositol 3-phosphate (PtdIns3P). In response to vascular endothelial growth factor (VEGFA), acts as a negative regulator of the VEGFR2-PI3K-mediated angiogenic signaling pathway by inhibiting endothelial cell migration and tube formation. In the developing brain, promotes both the transition from the multipolar to the bipolar stage and the radial migration of cortical neurons from the ventricular zone toward the superficial layer of the neocortex in a glial-dependent locomotion process. Probable downstream effector of the Reelin signaling pathway; promotes Purkinje cell (PC) dendrites development and formation of cerebellar synapses. Also functions as a tumor suppressor protein in prostate cancer progression; prevents cell proliferation and epithelial-to-mesenchymal transition (EMT) through activation of the glycogen synthase kinase-3 beta (GSK3B)-induced beta-catenin and inhibition of PI3K-AKT and Ras-MAPK survival downstream signaling cascades, respectively.</text>
</comment>
<comment type="subunit">
    <text evidence="2 8 10">On plasma membrane, exists in an inactive form complexed with TNFR1; in response to TNF-alpha, dissociates from TNFR1 complex, translocates to cytoplasm and forms part of an intracellular signaling complex comprising TRADD, RIPK1, TRAF2 and MAP3K5. Interacts with DAB1. Part of a cytoplasmic complex made of HIPK1, DAB2IP and MAP3K5 in response to TNF-alpha; this complex formation promotes MAP3K5-JNK activation and subsequent apoptosis. Interacts (via N-terminal domain) with JAK2; the interaction occurs in a IFNG/IFN-gamma-dependent manner and inhibits JAK2 autophosphorylation activity. Interacts (via C2 domain) with GSK3B; the interaction stimulates GSK3B kinase activation. Interacts (via C2 domain) with PPP2CA. Interacts (via proline-rich motif) with a regulatory p85 subunit (via SH3 domain) of the PI3K complex; the interaction inhibits the PI3K-AKT complex activity in a TNF-alpha-dependent manner in prostate cancer (PCa) cells. Interacts with AKT1; the interaction is increased in a TNF-alpha-induced manner. Interacts (via C2 domain and active form preferentially) with KDR/VEGFR2 (tyrosine-phosphorylated active form preferentially); the interaction occurs at the late phase of VEGFA response and inhibits KDR/VEGFR2 activity. Interacts (via N-terminus C2 domain) with MAP3K5 ('Ser-966' dephosphorylated form preferentially); the interaction occurs in a TNF-alpha-induced manner. Interacts (via Ras-GAP domain) with the catalytic subunit of protein phosphatase PP2A; the interaction occurs in resting endothelial cells, is further enhanced by TNF-alpha stimulation and is required to bridge PP2A to MAP3K5. Interacts (via C-terminus PER domain) with TRAF2 (via zinc fingers); the interaction occurs in a TNF-alpha-dependent manner. Interacts with 14-3-3 proteins; the interaction occurs in a TNF-alpha-dependent manner. Interacts (via Ras-GAP domain) with RIPK1 (via kinase domain); the interaction occurs in a TNF-alpha-dependent manner (By similarity). Interacts (via PH domain) with ERN1. Interacts with TRAF2. Interacts (via NPXY motif) with DAB2 (via PID domain). Interacts with RAB40C; acts as a GAP for RAB40C (By similarity).</text>
</comment>
<comment type="interaction">
    <interactant intactId="EBI-6306507">
        <id>Q3UHC7</id>
    </interactant>
    <interactant intactId="EBI-81680">
        <id>P97318</id>
        <label>Dab1</label>
    </interactant>
    <organismsDiffer>false</organismsDiffer>
    <experiments>3</experiments>
</comment>
<comment type="subcellular location">
    <subcellularLocation>
        <location evidence="2">Cytoplasm</location>
    </subcellularLocation>
    <subcellularLocation>
        <location evidence="26">Cell membrane</location>
        <topology evidence="26">Peripheral membrane protein</topology>
    </subcellularLocation>
    <subcellularLocation>
        <location evidence="2">Membrane</location>
    </subcellularLocation>
    <subcellularLocation>
        <location>Cell projection</location>
        <location>Dendrite</location>
    </subcellularLocation>
    <text evidence="1 2">Colocalizes with TIRAP at the plasma membrane. Colocalizes with ARF6 at the plasma membrane and endocytic vesicles. Translocates from the plasma membrane to the cytoplasm in response to TNF-alpha. Phosphatidylinositol 4-phosphate (PtdIns4P) binding is essential for plasma membrane localization (By similarity). Localized in soma and dendrites of Purkinje cells as well as in scattered cell bodies in the molecular layer of the cerebellum. Localized in the cytoplasmic space in close proximity to lipid droplets (By similarity).</text>
</comment>
<comment type="alternative products">
    <event type="alternative splicing"/>
    <isoform>
        <id>Q3UHC7-1</id>
        <name>1</name>
        <sequence type="displayed"/>
    </isoform>
    <isoform>
        <id>Q3UHC7-2</id>
        <name>2</name>
        <sequence type="described" ref="VSP_020956"/>
    </isoform>
    <isoform>
        <id>Q3UHC7-3</id>
        <name>3</name>
        <sequence type="described" ref="VSP_020957"/>
    </isoform>
    <isoform>
        <id>Q3UHC7-4</id>
        <name>4</name>
        <name>Dab2IP-L</name>
        <sequence type="described" ref="VSP_046519 VSP_046520"/>
    </isoform>
</comment>
<comment type="tissue specificity">
    <text evidence="8 9 11 17 19">Expressed in vascular endothelium of muscle and aorta, in smooth muscle cells of aorta and epithelial cells of lung. Expressed throughout the brain, including olfactory bulb, hypothalamus, cerebellum and cerebral cortex. Expressed in the soma and processes of neurons in a variety of brain structures, including the developing cerebral cortex, CA1 pyramidal neurons and Purkinje cells. Poorly expressed in medulloblastoma cells compared to cerebellar precursor proliferating progenitor cells (at protein level). Highly expressed in the brain, salivary gland, and testis; moderate expression in kidney and heart. Low expression in the lung, seminal vesicle, ventral prostate, epididymis, liver, and bladder. Very low expression in the coagulation gland and skeleton muscles. Lowest expression seen in spleen.</text>
</comment>
<comment type="developmental stage">
    <text evidence="8 11 18">Expressed in cortical plate neurons at 16 dpc. Expressed in the neocortex, including the cortical plate (CP) at 16.5 dpc, onward (at protein level). Expressed in brain at 13.5 dpc, onward. Expressed during embryogenesis in the vasculature.</text>
</comment>
<comment type="induction">
    <text evidence="17">Down-regulated in prostate cancer and medulloblastoma.</text>
</comment>
<comment type="domain">
    <text evidence="1">Exists in a closed inactive form by an intramolecular interaction between the N- and the C-terminal domains. The proline-rich motif is critical both for PI3K-AKT activity inhibition and MAP3K5 activation. The PH and C2 domains are necessary for the binding to phosphatidylinositol phosphate. The Ras-GAP domain is necessary for its tumor-suppressive function (By similarity). The C2 and GAP domains constitutively bind to MAP3K5 and facilitate the release of 14-3-3 proteins from MAP3K5. The PH and Ras-GAP domains, but not the NPXY motif, are crucial for its cell membrane localization and neuronal migration function. The PH domain is necessary but not sufficient to activate the JNK signaling pathway through ERN1.</text>
</comment>
<comment type="PTM">
    <text evidence="1">In response to TNF-alpha-induction, phosphorylated at Ser-728; phosphorylation leads to a conformational change, and thus, increases its association with 14-3-3 proteins, MAP3K5, RIPK1 and TRAF2 in endothelial cells; also stimulates regulatory p85 subunit sequestring and PI3K-p85 complex activity inhibition.</text>
</comment>
<comment type="disruption phenotype">
    <text evidence="11 12 18 19">Mice are viable and fertile but show a number of cerebellar abnormalities such as a delay in the Purkinje cell (PC) dendrites development and a disruption of late-born cortical neurons migration. Develope a prostate hyperplasia in epithelial compartment at 6 months of age. Show normal vasculature development but enhanced inflammatory angiogenesis.</text>
</comment>
<comment type="sequence caution" evidence="26">
    <conflict type="erroneous initiation">
        <sequence resource="EMBL-CDS" id="AAQ77379"/>
    </conflict>
    <text>Truncated N-terminus.</text>
</comment>
<comment type="sequence caution" evidence="26">
    <conflict type="erroneous initiation">
        <sequence resource="EMBL-CDS" id="AAQ77380"/>
    </conflict>
    <text>Truncated N-terminus.</text>
</comment>
<comment type="sequence caution" evidence="26">
    <conflict type="erroneous initiation">
        <sequence resource="EMBL-CDS" id="AAQ77381"/>
    </conflict>
    <text>Truncated N-terminus.</text>
</comment>
<reference key="1">
    <citation type="journal article" date="2006" name="DNA Cell Biol.">
        <title>Cloning of mouse Dab2ip gene, a novel member of the RasGTPase-activating protein family and characterization of its regulatory region in prostate.</title>
        <authorList>
            <person name="Chen H."/>
            <person name="Karam J.A."/>
            <person name="Schultz R."/>
            <person name="Zhang Z."/>
            <person name="Duncan C."/>
            <person name="Hsieh J.-T."/>
        </authorList>
    </citation>
    <scope>NUCLEOTIDE SEQUENCE [LARGE SCALE MRNA] (ISOFORM 2)</scope>
    <scope>ALTERNATIVE SPLICING</scope>
    <scope>TISSUE SPECIFICITY</scope>
    <source>
        <strain>129S6/SvEvTac</strain>
        <tissue>Spleen</tissue>
    </source>
</reference>
<reference key="2">
    <citation type="journal article" date="2013" name="PLoS ONE">
        <title>Dab2IP GTPase activating protein regulates dendrite development and synapse number in cerebellum.</title>
        <authorList>
            <person name="Qiao S."/>
            <person name="Kim S.H."/>
            <person name="Heck D."/>
            <person name="Goldowitz D."/>
            <person name="LeDoux M.S."/>
            <person name="Homayouni R."/>
        </authorList>
    </citation>
    <scope>NUCLEOTIDE SEQUENCE [MRNA] (ISOFORM 4)</scope>
    <scope>FUNCTION</scope>
    <scope>SUBCELLULAR LOCATION</scope>
    <scope>DISRUPTION PHENOTYPE</scope>
    <scope>TISSUE SPECIFICITY</scope>
</reference>
<reference key="3">
    <citation type="journal article" date="2005" name="Science">
        <title>The transcriptional landscape of the mammalian genome.</title>
        <authorList>
            <person name="Carninci P."/>
            <person name="Kasukawa T."/>
            <person name="Katayama S."/>
            <person name="Gough J."/>
            <person name="Frith M.C."/>
            <person name="Maeda N."/>
            <person name="Oyama R."/>
            <person name="Ravasi T."/>
            <person name="Lenhard B."/>
            <person name="Wells C."/>
            <person name="Kodzius R."/>
            <person name="Shimokawa K."/>
            <person name="Bajic V.B."/>
            <person name="Brenner S.E."/>
            <person name="Batalov S."/>
            <person name="Forrest A.R."/>
            <person name="Zavolan M."/>
            <person name="Davis M.J."/>
            <person name="Wilming L.G."/>
            <person name="Aidinis V."/>
            <person name="Allen J.E."/>
            <person name="Ambesi-Impiombato A."/>
            <person name="Apweiler R."/>
            <person name="Aturaliya R.N."/>
            <person name="Bailey T.L."/>
            <person name="Bansal M."/>
            <person name="Baxter L."/>
            <person name="Beisel K.W."/>
            <person name="Bersano T."/>
            <person name="Bono H."/>
            <person name="Chalk A.M."/>
            <person name="Chiu K.P."/>
            <person name="Choudhary V."/>
            <person name="Christoffels A."/>
            <person name="Clutterbuck D.R."/>
            <person name="Crowe M.L."/>
            <person name="Dalla E."/>
            <person name="Dalrymple B.P."/>
            <person name="de Bono B."/>
            <person name="Della Gatta G."/>
            <person name="di Bernardo D."/>
            <person name="Down T."/>
            <person name="Engstrom P."/>
            <person name="Fagiolini M."/>
            <person name="Faulkner G."/>
            <person name="Fletcher C.F."/>
            <person name="Fukushima T."/>
            <person name="Furuno M."/>
            <person name="Futaki S."/>
            <person name="Gariboldi M."/>
            <person name="Georgii-Hemming P."/>
            <person name="Gingeras T.R."/>
            <person name="Gojobori T."/>
            <person name="Green R.E."/>
            <person name="Gustincich S."/>
            <person name="Harbers M."/>
            <person name="Hayashi Y."/>
            <person name="Hensch T.K."/>
            <person name="Hirokawa N."/>
            <person name="Hill D."/>
            <person name="Huminiecki L."/>
            <person name="Iacono M."/>
            <person name="Ikeo K."/>
            <person name="Iwama A."/>
            <person name="Ishikawa T."/>
            <person name="Jakt M."/>
            <person name="Kanapin A."/>
            <person name="Katoh M."/>
            <person name="Kawasawa Y."/>
            <person name="Kelso J."/>
            <person name="Kitamura H."/>
            <person name="Kitano H."/>
            <person name="Kollias G."/>
            <person name="Krishnan S.P."/>
            <person name="Kruger A."/>
            <person name="Kummerfeld S.K."/>
            <person name="Kurochkin I.V."/>
            <person name="Lareau L.F."/>
            <person name="Lazarevic D."/>
            <person name="Lipovich L."/>
            <person name="Liu J."/>
            <person name="Liuni S."/>
            <person name="McWilliam S."/>
            <person name="Madan Babu M."/>
            <person name="Madera M."/>
            <person name="Marchionni L."/>
            <person name="Matsuda H."/>
            <person name="Matsuzawa S."/>
            <person name="Miki H."/>
            <person name="Mignone F."/>
            <person name="Miyake S."/>
            <person name="Morris K."/>
            <person name="Mottagui-Tabar S."/>
            <person name="Mulder N."/>
            <person name="Nakano N."/>
            <person name="Nakauchi H."/>
            <person name="Ng P."/>
            <person name="Nilsson R."/>
            <person name="Nishiguchi S."/>
            <person name="Nishikawa S."/>
            <person name="Nori F."/>
            <person name="Ohara O."/>
            <person name="Okazaki Y."/>
            <person name="Orlando V."/>
            <person name="Pang K.C."/>
            <person name="Pavan W.J."/>
            <person name="Pavesi G."/>
            <person name="Pesole G."/>
            <person name="Petrovsky N."/>
            <person name="Piazza S."/>
            <person name="Reed J."/>
            <person name="Reid J.F."/>
            <person name="Ring B.Z."/>
            <person name="Ringwald M."/>
            <person name="Rost B."/>
            <person name="Ruan Y."/>
            <person name="Salzberg S.L."/>
            <person name="Sandelin A."/>
            <person name="Schneider C."/>
            <person name="Schoenbach C."/>
            <person name="Sekiguchi K."/>
            <person name="Semple C.A."/>
            <person name="Seno S."/>
            <person name="Sessa L."/>
            <person name="Sheng Y."/>
            <person name="Shibata Y."/>
            <person name="Shimada H."/>
            <person name="Shimada K."/>
            <person name="Silva D."/>
            <person name="Sinclair B."/>
            <person name="Sperling S."/>
            <person name="Stupka E."/>
            <person name="Sugiura K."/>
            <person name="Sultana R."/>
            <person name="Takenaka Y."/>
            <person name="Taki K."/>
            <person name="Tammoja K."/>
            <person name="Tan S.L."/>
            <person name="Tang S."/>
            <person name="Taylor M.S."/>
            <person name="Tegner J."/>
            <person name="Teichmann S.A."/>
            <person name="Ueda H.R."/>
            <person name="van Nimwegen E."/>
            <person name="Verardo R."/>
            <person name="Wei C.L."/>
            <person name="Yagi K."/>
            <person name="Yamanishi H."/>
            <person name="Zabarovsky E."/>
            <person name="Zhu S."/>
            <person name="Zimmer A."/>
            <person name="Hide W."/>
            <person name="Bult C."/>
            <person name="Grimmond S.M."/>
            <person name="Teasdale R.D."/>
            <person name="Liu E.T."/>
            <person name="Brusic V."/>
            <person name="Quackenbush J."/>
            <person name="Wahlestedt C."/>
            <person name="Mattick J.S."/>
            <person name="Hume D.A."/>
            <person name="Kai C."/>
            <person name="Sasaki D."/>
            <person name="Tomaru Y."/>
            <person name="Fukuda S."/>
            <person name="Kanamori-Katayama M."/>
            <person name="Suzuki M."/>
            <person name="Aoki J."/>
            <person name="Arakawa T."/>
            <person name="Iida J."/>
            <person name="Imamura K."/>
            <person name="Itoh M."/>
            <person name="Kato T."/>
            <person name="Kawaji H."/>
            <person name="Kawagashira N."/>
            <person name="Kawashima T."/>
            <person name="Kojima M."/>
            <person name="Kondo S."/>
            <person name="Konno H."/>
            <person name="Nakano K."/>
            <person name="Ninomiya N."/>
            <person name="Nishio T."/>
            <person name="Okada M."/>
            <person name="Plessy C."/>
            <person name="Shibata K."/>
            <person name="Shiraki T."/>
            <person name="Suzuki S."/>
            <person name="Tagami M."/>
            <person name="Waki K."/>
            <person name="Watahiki A."/>
            <person name="Okamura-Oho Y."/>
            <person name="Suzuki H."/>
            <person name="Kawai J."/>
            <person name="Hayashizaki Y."/>
        </authorList>
    </citation>
    <scope>NUCLEOTIDE SEQUENCE [LARGE SCALE MRNA] (ISOFORMS 1 AND 2)</scope>
    <source>
        <strain>C57BL/6J</strain>
        <tissue>Brain</tissue>
        <tissue>Heart</tissue>
    </source>
</reference>
<reference key="4">
    <citation type="journal article" date="2009" name="PLoS Biol.">
        <title>Lineage-specific biology revealed by a finished genome assembly of the mouse.</title>
        <authorList>
            <person name="Church D.M."/>
            <person name="Goodstadt L."/>
            <person name="Hillier L.W."/>
            <person name="Zody M.C."/>
            <person name="Goldstein S."/>
            <person name="She X."/>
            <person name="Bult C.J."/>
            <person name="Agarwala R."/>
            <person name="Cherry J.L."/>
            <person name="DiCuccio M."/>
            <person name="Hlavina W."/>
            <person name="Kapustin Y."/>
            <person name="Meric P."/>
            <person name="Maglott D."/>
            <person name="Birtle Z."/>
            <person name="Marques A.C."/>
            <person name="Graves T."/>
            <person name="Zhou S."/>
            <person name="Teague B."/>
            <person name="Potamousis K."/>
            <person name="Churas C."/>
            <person name="Place M."/>
            <person name="Herschleb J."/>
            <person name="Runnheim R."/>
            <person name="Forrest D."/>
            <person name="Amos-Landgraf J."/>
            <person name="Schwartz D.C."/>
            <person name="Cheng Z."/>
            <person name="Lindblad-Toh K."/>
            <person name="Eichler E.E."/>
            <person name="Ponting C.P."/>
        </authorList>
    </citation>
    <scope>NUCLEOTIDE SEQUENCE [LARGE SCALE GENOMIC DNA]</scope>
    <source>
        <strain>C57BL/6J</strain>
    </source>
</reference>
<reference key="5">
    <citation type="journal article" date="2004" name="Genome Res.">
        <title>The status, quality, and expansion of the NIH full-length cDNA project: the Mammalian Gene Collection (MGC).</title>
        <authorList>
            <consortium name="The MGC Project Team"/>
        </authorList>
    </citation>
    <scope>NUCLEOTIDE SEQUENCE [LARGE SCALE MRNA] (ISOFORM 2)</scope>
</reference>
<reference key="6">
    <citation type="journal article" date="2003" name="DNA Res.">
        <title>Prediction of the coding sequences of mouse homologues of KIAA gene: II. The complete nucleotide sequences of 400 mouse KIAA-homologous cDNAs identified by screening of terminal sequences of cDNA clones randomly sampled from size-fractionated libraries.</title>
        <authorList>
            <person name="Okazaki N."/>
            <person name="Kikuno R."/>
            <person name="Ohara R."/>
            <person name="Inamoto S."/>
            <person name="Aizawa H."/>
            <person name="Yuasa S."/>
            <person name="Nakajima D."/>
            <person name="Nagase T."/>
            <person name="Ohara O."/>
            <person name="Koga H."/>
        </authorList>
    </citation>
    <scope>NUCLEOTIDE SEQUENCE [LARGE SCALE MRNA] OF 328-1189 (ISOFORM 3)</scope>
    <source>
        <tissue>Brain</tissue>
    </source>
</reference>
<reference key="7">
    <citation type="journal article" date="2003" name="Brain Res. Mol. Brain Res.">
        <title>Interaction of Disabled-1 and the GTPase activating protein Dab2IP in mouse brain.</title>
        <authorList>
            <person name="Homayouni R."/>
            <person name="Magdaleno S."/>
            <person name="Keshvara L."/>
            <person name="Rice D.S."/>
            <person name="Curran T."/>
        </authorList>
    </citation>
    <scope>NUCLEOTIDE SEQUENCE [LARGE SCALE MRNA] OF 586-1189 (ISOFORM 4)</scope>
    <scope>INTERACTION WITH DAB2</scope>
    <scope>TISSUE SPECIFICITY</scope>
    <scope>DEVELOPMENTAL STAGE</scope>
    <source>
        <strain>C57BL/6J</strain>
    </source>
</reference>
<reference key="8">
    <citation type="journal article" date="2008" name="J. Biol. Chem.">
        <title>AIP1 is critical in transducing IRE1-mediated endoplasmic reticulum stress response.</title>
        <authorList>
            <person name="Luo D."/>
            <person name="He Y."/>
            <person name="Zhang H."/>
            <person name="Yu L."/>
            <person name="Chen H."/>
            <person name="Xu Z."/>
            <person name="Tang S."/>
            <person name="Urano F."/>
            <person name="Min W."/>
        </authorList>
    </citation>
    <scope>FUNCTION</scope>
    <scope>INTERACTION WITH ERN1 AND TRAF2</scope>
</reference>
<reference key="9">
    <citation type="journal article" date="2008" name="J. Clin. Invest.">
        <title>AIP1 functions as an endogenous inhibitor of VEGFR2-mediated signaling and inflammatory angiogenesis in mice.</title>
        <authorList>
            <person name="Zhang H."/>
            <person name="He Y."/>
            <person name="Dai S."/>
            <person name="Xu Z."/>
            <person name="Luo Y."/>
            <person name="Wan T."/>
            <person name="Luo D."/>
            <person name="Jones D."/>
            <person name="Tang S."/>
            <person name="Chen H."/>
            <person name="Sessa W.C."/>
            <person name="Min W."/>
        </authorList>
    </citation>
    <scope>FUNCTION</scope>
    <scope>DISRUPTION PHENOTYPE</scope>
    <scope>TISSUE SPECIFICITY</scope>
    <scope>DEVELOPMENTAL STAGE</scope>
</reference>
<reference key="10">
    <citation type="journal article" date="2009" name="Proc. Natl. Acad. Sci. U.S.A.">
        <title>DAB2IP coordinates both PI3K-Akt and ASK1 pathways for cell survival and apoptosis.</title>
        <authorList>
            <person name="Xie D."/>
            <person name="Gore C."/>
            <person name="Zhou J."/>
            <person name="Pong R.C."/>
            <person name="Zhang H."/>
            <person name="Yu L."/>
            <person name="Vessella R.L."/>
            <person name="Min W."/>
            <person name="Hsieh J.T."/>
        </authorList>
    </citation>
    <scope>FUNCTION</scope>
    <scope>DISRUPTION PHENOTYPE</scope>
</reference>
<reference key="11">
    <citation type="journal article" date="2010" name="Cell">
        <title>A tissue-specific atlas of mouse protein phosphorylation and expression.</title>
        <authorList>
            <person name="Huttlin E.L."/>
            <person name="Jedrychowski M.P."/>
            <person name="Elias J.E."/>
            <person name="Goswami T."/>
            <person name="Rad R."/>
            <person name="Beausoleil S.A."/>
            <person name="Villen J."/>
            <person name="Haas W."/>
            <person name="Sowa M.E."/>
            <person name="Gygi S.P."/>
        </authorList>
    </citation>
    <scope>PHOSPHORYLATION [LARGE SCALE ANALYSIS] AT SER-747</scope>
    <scope>IDENTIFICATION BY MASS SPECTROMETRY [LARGE SCALE ANALYSIS]</scope>
    <source>
        <tissue>Brain</tissue>
        <tissue>Brown adipose tissue</tissue>
        <tissue>Heart</tissue>
        <tissue>Kidney</tissue>
        <tissue>Lung</tissue>
        <tissue>Pancreas</tissue>
        <tissue>Testis</tissue>
    </source>
</reference>
<reference key="12">
    <citation type="journal article" date="2010" name="J. Biol. Chem.">
        <title>AIP1 functions as Arf6-GAP to negatively regulate TLR4 signaling.</title>
        <authorList>
            <person name="Wan T."/>
            <person name="Liu T."/>
            <person name="Zhang H."/>
            <person name="Tang S."/>
            <person name="Min W."/>
        </authorList>
    </citation>
    <scope>FUNCTION</scope>
</reference>
<reference key="13">
    <citation type="journal article" date="2010" name="Nat. Med.">
        <title>An oncogene-tumor suppressor cascade drives metastatic prostate cancer by coordinately activating Ras and nuclear factor-kappaB.</title>
        <authorList>
            <person name="Min J."/>
            <person name="Zaslavsky A."/>
            <person name="Fedele G."/>
            <person name="McLaughlin S.K."/>
            <person name="Reczek E.E."/>
            <person name="De Raedt T."/>
            <person name="Guney I."/>
            <person name="Strochlic D.E."/>
            <person name="Macconaill L.E."/>
            <person name="Beroukhim R."/>
            <person name="Bronson R.T."/>
            <person name="Ryeom S."/>
            <person name="Hahn W.C."/>
            <person name="Loda M."/>
            <person name="Cichowski K."/>
        </authorList>
    </citation>
    <scope>FUNCTION IN PROSTATE CANCER</scope>
</reference>
<reference key="14">
    <citation type="journal article" date="2010" name="Proc. Natl. Acad. Sci. U.S.A.">
        <title>Role of DAB2IP in modulating epithelial-to-mesenchymal transition and prostate cancer metastasis.</title>
        <authorList>
            <person name="Xie D."/>
            <person name="Gore C."/>
            <person name="Liu J."/>
            <person name="Pong R.C."/>
            <person name="Mason R."/>
            <person name="Hao G."/>
            <person name="Long M."/>
            <person name="Kabbani W."/>
            <person name="Yu L."/>
            <person name="Zhang H."/>
            <person name="Chen H."/>
            <person name="Sun X."/>
            <person name="Boothman D.A."/>
            <person name="Min W."/>
            <person name="Hsieh J.T."/>
        </authorList>
    </citation>
    <scope>FUNCTION IN PROSTATE CANCER</scope>
</reference>
<reference key="15">
    <citation type="journal article" date="2011" name="Circ. Res.">
        <title>AIP1 prevents graft arteriosclerosis by inhibiting interferon-gamma-dependent smooth muscle cell proliferation and intimal expansion.</title>
        <authorList>
            <person name="Yu L."/>
            <person name="Qin L."/>
            <person name="Zhang H."/>
            <person name="He Y."/>
            <person name="Chen H."/>
            <person name="Pober J.S."/>
            <person name="Tellides G."/>
            <person name="Min W."/>
        </authorList>
    </citation>
    <scope>FUNCTION</scope>
</reference>
<reference key="16">
    <citation type="journal article" date="2012" name="Clin. Cancer Res.">
        <title>EZH2-regulated DAB2IP is a medulloblastoma tumor suppressor and a positive marker for survival.</title>
        <authorList>
            <person name="Smits M."/>
            <person name="van Rijn S."/>
            <person name="Hulleman E."/>
            <person name="Biesmans D."/>
            <person name="van Vuurden D.G."/>
            <person name="Kool M."/>
            <person name="Haberler C."/>
            <person name="Aronica E."/>
            <person name="Vandertop W.P."/>
            <person name="Noske D.P."/>
            <person name="Wurdinger T."/>
        </authorList>
    </citation>
    <scope>FUNCTION IN MEDULLOBLASTOMA DEVELOPMENT</scope>
    <scope>INDUCTION</scope>
    <scope>TISSUE SPECIFICITY</scope>
</reference>
<reference key="17">
    <citation type="journal article" date="2012" name="PLoS ONE">
        <title>Dab2ip regulates neuronal migration and neurite outgrowth in the developing neocortex.</title>
        <authorList>
            <person name="Lee G.H."/>
            <person name="Kim S.H."/>
            <person name="Homayouni R."/>
            <person name="D'Arcangelo G."/>
        </authorList>
    </citation>
    <scope>FUNCTION</scope>
    <scope>SUBCELLULAR LOCATION</scope>
    <scope>DISRUPTION PHENOTYPE</scope>
    <scope>DEVELOPMENTAL STAGE</scope>
</reference>
<proteinExistence type="evidence at protein level"/>
<evidence type="ECO:0000250" key="1"/>
<evidence type="ECO:0000250" key="2">
    <source>
        <dbReference type="UniProtKB" id="Q5VWQ8"/>
    </source>
</evidence>
<evidence type="ECO:0000255" key="3"/>
<evidence type="ECO:0000255" key="4">
    <source>
        <dbReference type="PROSITE-ProRule" id="PRU00041"/>
    </source>
</evidence>
<evidence type="ECO:0000255" key="5">
    <source>
        <dbReference type="PROSITE-ProRule" id="PRU00145"/>
    </source>
</evidence>
<evidence type="ECO:0000255" key="6">
    <source>
        <dbReference type="PROSITE-ProRule" id="PRU00167"/>
    </source>
</evidence>
<evidence type="ECO:0000256" key="7">
    <source>
        <dbReference type="SAM" id="MobiDB-lite"/>
    </source>
</evidence>
<evidence type="ECO:0000269" key="8">
    <source>
    </source>
</evidence>
<evidence type="ECO:0000269" key="9">
    <source>
    </source>
</evidence>
<evidence type="ECO:0000269" key="10">
    <source>
    </source>
</evidence>
<evidence type="ECO:0000269" key="11">
    <source>
    </source>
</evidence>
<evidence type="ECO:0000269" key="12">
    <source>
    </source>
</evidence>
<evidence type="ECO:0000269" key="13">
    <source>
    </source>
</evidence>
<evidence type="ECO:0000269" key="14">
    <source>
    </source>
</evidence>
<evidence type="ECO:0000269" key="15">
    <source>
    </source>
</evidence>
<evidence type="ECO:0000269" key="16">
    <source>
    </source>
</evidence>
<evidence type="ECO:0000269" key="17">
    <source>
    </source>
</evidence>
<evidence type="ECO:0000269" key="18">
    <source>
    </source>
</evidence>
<evidence type="ECO:0000269" key="19">
    <source>
    </source>
</evidence>
<evidence type="ECO:0000303" key="20">
    <source>
    </source>
</evidence>
<evidence type="ECO:0000303" key="21">
    <source>
    </source>
</evidence>
<evidence type="ECO:0000303" key="22">
    <source>
    </source>
</evidence>
<evidence type="ECO:0000303" key="23">
    <source>
    </source>
</evidence>
<evidence type="ECO:0000303" key="24">
    <source>
    </source>
</evidence>
<evidence type="ECO:0000303" key="25">
    <source>
    </source>
</evidence>
<evidence type="ECO:0000305" key="26"/>
<evidence type="ECO:0007744" key="27">
    <source>
    </source>
</evidence>
<sequence length="1189" mass="131726">MSAGGNARKSTGRPSYYYRLLRRPRLQRQRSRSRSRTRPARESPQERPGSRRSLPGSMSEKNPSMEPSASTPFRVTGFLSRRLKGSIKRTKSQPKLDRNHSFRHILPGFRSAAAAAADNERSHLMPRLKESRSHESLLSPSSAVEALDLSMEEEVIIKPVHSSILGQDYCFEVTTSSGSKCFSCRSAAERDKWMENLRRAVHPNKDNSRRVEHILKLWVIEAKDLPAKKKYLCELCLDDVLYARTTSKLKTDNVFWGEHFEFHNLPPLRTVTVHLYRETDKKKKKERNSYLGLVSLPAASVAGRQFVEKWYPVVTPNPKGGKGPGPMIRIKARYQTVSILPMEMYKEFAEHITNHYLGLCAALEPILSAKTKEEMASALVHILQSTGKVKDFLTDLMMSEVDRCGDNEHLIFRENTLATKAIEEYLKLVGQKYLQDALGEFIKALYESDENCEVDPSKCSSADLPEHQGNLKMCCELAFCKIINSYCVFPRELKEVFASWRQECSSRGRPDISERLISASLFLRFLCPAIMSPSLFNLLQEYPDDRTARTLTLIAKVTQNLANFAKFGSKEEYMSFMNQFLEHEWTNMQRFLLEISNPETLSNTAGFEGYIDLGRELSSLHSLLWEAVSQLDQSVVSKLGPLPRILRDVHTALSTPGSGQLPGTNDLASTPGSGSSSVSAGLQKMVIENDLSGLIDFTRLPSPTPENKDLFFVTRSSGVQPSPARSSSYSEANEPDLQMANGSKSLSMVDLQDARTLDGEAGSPVGPDALPADGQVPATQLLAGWPARAAPVSLAGLATVRRAVPTPTTPGTSEGAPGRPQLLAPLSFQNPVYQMAAGLPLSPRGLGDSGSEGHSSLSSHSNSEELAAAAKLGSFSTAAEELARRPGELARRQMSLTEKGGQPTVPRQNSAGPQRRIDQPPPPPPPPPPAPRGRTPPTLLSTLQYPRPSSGTLASASPDWAGPGTRLRQQSSSSKGDSPELKPRAMHKQGPSPVSPNALDRTAAWLLTMNAQLLEDEGLGPDPPHRDRLRSKEELSQAEKDLAVLQDKLRISTKKLEEYETLFKCQEETTQKLVLEYQARLEEGEERLRRQQEDKDIQMKGIISRLMSVEEELKKDHAEMQAAVDSKQKIIDAQEKRIASLDAANARLMSALTQLKERYSMQARNGVSPTNPTKLQITENGEFRNSSNC</sequence>
<organism>
    <name type="scientific">Mus musculus</name>
    <name type="common">Mouse</name>
    <dbReference type="NCBI Taxonomy" id="10090"/>
    <lineage>
        <taxon>Eukaryota</taxon>
        <taxon>Metazoa</taxon>
        <taxon>Chordata</taxon>
        <taxon>Craniata</taxon>
        <taxon>Vertebrata</taxon>
        <taxon>Euteleostomi</taxon>
        <taxon>Mammalia</taxon>
        <taxon>Eutheria</taxon>
        <taxon>Euarchontoglires</taxon>
        <taxon>Glires</taxon>
        <taxon>Rodentia</taxon>
        <taxon>Myomorpha</taxon>
        <taxon>Muroidea</taxon>
        <taxon>Muridae</taxon>
        <taxon>Murinae</taxon>
        <taxon>Mus</taxon>
        <taxon>Mus</taxon>
    </lineage>
</organism>
<accession>Q3UHC7</accession>
<accession>A2AUW9</accession>
<accession>A2AUX2</accession>
<accession>A5X2X2</accession>
<accession>B7ZD28</accession>
<accession>Q3TPD5</accession>
<accession>Q3UH44</accession>
<accession>Q6JTV1</accession>
<accession>Q6Y636</accession>
<accession>Q80T97</accession>
<name>DAB2P_MOUSE</name>
<keyword id="KW-0025">Alternative splicing</keyword>
<keyword id="KW-0037">Angiogenesis</keyword>
<keyword id="KW-0053">Apoptosis</keyword>
<keyword id="KW-0131">Cell cycle</keyword>
<keyword id="KW-1003">Cell membrane</keyword>
<keyword id="KW-0966">Cell projection</keyword>
<keyword id="KW-0175">Coiled coil</keyword>
<keyword id="KW-0963">Cytoplasm</keyword>
<keyword id="KW-0217">Developmental protein</keyword>
<keyword id="KW-0341">Growth regulation</keyword>
<keyword id="KW-0343">GTPase activation</keyword>
<keyword id="KW-0391">Immunity</keyword>
<keyword id="KW-0395">Inflammatory response</keyword>
<keyword id="KW-0399">Innate immunity</keyword>
<keyword id="KW-0472">Membrane</keyword>
<keyword id="KW-0597">Phosphoprotein</keyword>
<keyword id="KW-1185">Reference proteome</keyword>
<keyword id="KW-0346">Stress response</keyword>
<keyword id="KW-0043">Tumor suppressor</keyword>
<keyword id="KW-0834">Unfolded protein response</keyword>
<gene>
    <name type="primary">Dab2ip</name>
    <name type="synonym">Kiaa1743</name>
</gene>
<protein>
    <recommendedName>
        <fullName>Disabled homolog 2-interacting protein</fullName>
        <shortName>DAB2-interacting protein</shortName>
    </recommendedName>
    <alternativeName>
        <fullName>ASK-interacting protein 1</fullName>
    </alternativeName>
    <alternativeName>
        <fullName>DOC-2/DAB-2 interactive protein</fullName>
    </alternativeName>
</protein>
<dbReference type="EMBL" id="AY305656">
    <property type="protein sequence ID" value="AAQ77379.1"/>
    <property type="status" value="ALT_INIT"/>
    <property type="molecule type" value="mRNA"/>
</dbReference>
<dbReference type="EMBL" id="AY305657">
    <property type="protein sequence ID" value="AAQ77380.1"/>
    <property type="status" value="ALT_INIT"/>
    <property type="molecule type" value="mRNA"/>
</dbReference>
<dbReference type="EMBL" id="AY305658">
    <property type="protein sequence ID" value="AAQ77381.1"/>
    <property type="status" value="ALT_INIT"/>
    <property type="molecule type" value="mRNA"/>
</dbReference>
<dbReference type="EMBL" id="DQ473307">
    <property type="protein sequence ID" value="ABF13290.1"/>
    <property type="molecule type" value="mRNA"/>
</dbReference>
<dbReference type="EMBL" id="AK147464">
    <property type="protein sequence ID" value="BAE27930.1"/>
    <property type="molecule type" value="mRNA"/>
</dbReference>
<dbReference type="EMBL" id="AK147593">
    <property type="protein sequence ID" value="BAE28013.1"/>
    <property type="molecule type" value="mRNA"/>
</dbReference>
<dbReference type="EMBL" id="AK164475">
    <property type="protein sequence ID" value="BAE37801.1"/>
    <property type="molecule type" value="mRNA"/>
</dbReference>
<dbReference type="EMBL" id="AL929241">
    <property type="status" value="NOT_ANNOTATED_CDS"/>
    <property type="molecule type" value="Genomic_DNA"/>
</dbReference>
<dbReference type="EMBL" id="BC118530">
    <property type="protein sequence ID" value="AAI18531.1"/>
    <property type="molecule type" value="mRNA"/>
</dbReference>
<dbReference type="EMBL" id="AK122548">
    <property type="protein sequence ID" value="BAC65830.1"/>
    <property type="molecule type" value="mRNA"/>
</dbReference>
<dbReference type="EMBL" id="AY178784">
    <property type="protein sequence ID" value="AAP31233.1"/>
    <property type="molecule type" value="mRNA"/>
</dbReference>
<dbReference type="CCDS" id="CCDS50577.1">
    <molecule id="Q3UHC7-4"/>
</dbReference>
<dbReference type="CCDS" id="CCDS50578.1">
    <molecule id="Q3UHC7-1"/>
</dbReference>
<dbReference type="CCDS" id="CCDS71045.1">
    <molecule id="Q3UHC7-2"/>
</dbReference>
<dbReference type="RefSeq" id="NP_001001602.2">
    <property type="nucleotide sequence ID" value="NM_001001602.2"/>
</dbReference>
<dbReference type="RefSeq" id="NP_001107596.1">
    <molecule id="Q3UHC7-1"/>
    <property type="nucleotide sequence ID" value="NM_001114124.2"/>
</dbReference>
<dbReference type="RefSeq" id="NP_001107597.1">
    <molecule id="Q3UHC7-4"/>
    <property type="nucleotide sequence ID" value="NM_001114125.1"/>
</dbReference>
<dbReference type="RefSeq" id="NP_001277568.1">
    <molecule id="Q3UHC7-2"/>
    <property type="nucleotide sequence ID" value="NM_001290639.1"/>
</dbReference>
<dbReference type="RefSeq" id="NP_001277569.1">
    <property type="nucleotide sequence ID" value="NM_001290640.1"/>
</dbReference>
<dbReference type="RefSeq" id="NP_001277570.1">
    <molecule id="Q3UHC7-2"/>
    <property type="nucleotide sequence ID" value="NM_001290641.1"/>
</dbReference>
<dbReference type="RefSeq" id="XP_006498370.2">
    <molecule id="Q3UHC7-2"/>
    <property type="nucleotide sequence ID" value="XM_006498307.3"/>
</dbReference>
<dbReference type="RefSeq" id="XP_036018432.1">
    <molecule id="Q3UHC7-2"/>
    <property type="nucleotide sequence ID" value="XM_036162539.1"/>
</dbReference>
<dbReference type="RefSeq" id="XP_036018440.1">
    <molecule id="Q3UHC7-3"/>
    <property type="nucleotide sequence ID" value="XM_036162547.1"/>
</dbReference>
<dbReference type="RefSeq" id="XP_036018446.1">
    <molecule id="Q3UHC7-2"/>
    <property type="nucleotide sequence ID" value="XM_036162553.1"/>
</dbReference>
<dbReference type="RefSeq" id="XP_036018447.1">
    <molecule id="Q3UHC7-2"/>
    <property type="nucleotide sequence ID" value="XM_036162554.1"/>
</dbReference>
<dbReference type="RefSeq" id="XP_036018448.1">
    <molecule id="Q3UHC7-2"/>
    <property type="nucleotide sequence ID" value="XM_036162555.1"/>
</dbReference>
<dbReference type="SMR" id="Q3UHC7"/>
<dbReference type="BioGRID" id="213562">
    <property type="interactions" value="30"/>
</dbReference>
<dbReference type="CORUM" id="Q3UHC7"/>
<dbReference type="FunCoup" id="Q3UHC7">
    <property type="interactions" value="804"/>
</dbReference>
<dbReference type="IntAct" id="Q3UHC7">
    <property type="interactions" value="5"/>
</dbReference>
<dbReference type="MINT" id="Q3UHC7"/>
<dbReference type="STRING" id="10090.ENSMUSP00000088532"/>
<dbReference type="GlyGen" id="Q3UHC7">
    <property type="glycosylation" value="4 sites, 1 N-linked glycan (1 site), 1 O-linked glycan (2 sites)"/>
</dbReference>
<dbReference type="iPTMnet" id="Q3UHC7"/>
<dbReference type="PhosphoSitePlus" id="Q3UHC7"/>
<dbReference type="jPOST" id="Q3UHC7"/>
<dbReference type="PaxDb" id="10090-ENSMUSP00000088532"/>
<dbReference type="PeptideAtlas" id="Q3UHC7"/>
<dbReference type="ProteomicsDB" id="279149">
    <molecule id="Q3UHC7-1"/>
</dbReference>
<dbReference type="ProteomicsDB" id="279150">
    <molecule id="Q3UHC7-2"/>
</dbReference>
<dbReference type="ProteomicsDB" id="279151">
    <molecule id="Q3UHC7-3"/>
</dbReference>
<dbReference type="ProteomicsDB" id="279152">
    <molecule id="Q3UHC7-4"/>
</dbReference>
<dbReference type="Pumba" id="Q3UHC7"/>
<dbReference type="Antibodypedia" id="48362">
    <property type="antibodies" value="112 antibodies from 20 providers"/>
</dbReference>
<dbReference type="DNASU" id="69601"/>
<dbReference type="Ensembl" id="ENSMUST00000091010.12">
    <molecule id="Q3UHC7-1"/>
    <property type="protein sequence ID" value="ENSMUSP00000088532.6"/>
    <property type="gene ID" value="ENSMUSG00000026883.18"/>
</dbReference>
<dbReference type="Ensembl" id="ENSMUST00000112983.8">
    <molecule id="Q3UHC7-2"/>
    <property type="protein sequence ID" value="ENSMUSP00000108607.2"/>
    <property type="gene ID" value="ENSMUSG00000026883.18"/>
</dbReference>
<dbReference type="Ensembl" id="ENSMUST00000112986.9">
    <molecule id="Q3UHC7-4"/>
    <property type="protein sequence ID" value="ENSMUSP00000108610.3"/>
    <property type="gene ID" value="ENSMUSG00000026883.18"/>
</dbReference>
<dbReference type="Ensembl" id="ENSMUST00000112992.9">
    <molecule id="Q3UHC7-3"/>
    <property type="protein sequence ID" value="ENSMUSP00000108616.3"/>
    <property type="gene ID" value="ENSMUSG00000026883.18"/>
</dbReference>
<dbReference type="GeneID" id="69601"/>
<dbReference type="KEGG" id="mmu:69601"/>
<dbReference type="UCSC" id="uc008jkr.2">
    <molecule id="Q3UHC7-1"/>
    <property type="organism name" value="mouse"/>
</dbReference>
<dbReference type="UCSC" id="uc008jkv.2">
    <molecule id="Q3UHC7-3"/>
    <property type="organism name" value="mouse"/>
</dbReference>
<dbReference type="UCSC" id="uc008jkx.2">
    <molecule id="Q3UHC7-4"/>
    <property type="organism name" value="mouse"/>
</dbReference>
<dbReference type="AGR" id="MGI:1916851"/>
<dbReference type="CTD" id="153090"/>
<dbReference type="MGI" id="MGI:1916851">
    <property type="gene designation" value="Dab2ip"/>
</dbReference>
<dbReference type="VEuPathDB" id="HostDB:ENSMUSG00000026883"/>
<dbReference type="eggNOG" id="KOG3508">
    <property type="taxonomic scope" value="Eukaryota"/>
</dbReference>
<dbReference type="GeneTree" id="ENSGT00940000155853"/>
<dbReference type="HOGENOM" id="CLU_001727_1_0_1"/>
<dbReference type="InParanoid" id="Q3UHC7"/>
<dbReference type="OrthoDB" id="5572587at2759"/>
<dbReference type="PhylomeDB" id="Q3UHC7"/>
<dbReference type="TreeFam" id="TF105303"/>
<dbReference type="Reactome" id="R-MMU-5658442">
    <property type="pathway name" value="Regulation of RAS by GAPs"/>
</dbReference>
<dbReference type="BioGRID-ORCS" id="69601">
    <property type="hits" value="1 hit in 80 CRISPR screens"/>
</dbReference>
<dbReference type="ChiTaRS" id="Dab2ip">
    <property type="organism name" value="mouse"/>
</dbReference>
<dbReference type="PRO" id="PR:Q3UHC7"/>
<dbReference type="Proteomes" id="UP000000589">
    <property type="component" value="Chromosome 2"/>
</dbReference>
<dbReference type="RNAct" id="Q3UHC7">
    <property type="molecule type" value="protein"/>
</dbReference>
<dbReference type="Bgee" id="ENSMUSG00000026883">
    <property type="expression patterns" value="Expressed in cortical plate and 265 other cell types or tissues"/>
</dbReference>
<dbReference type="ExpressionAtlas" id="Q3UHC7">
    <property type="expression patterns" value="baseline and differential"/>
</dbReference>
<dbReference type="GO" id="GO:1990597">
    <property type="term" value="C:AIP1-IRE1 complex"/>
    <property type="evidence" value="ECO:0000353"/>
    <property type="project" value="ParkinsonsUK-UCL"/>
</dbReference>
<dbReference type="GO" id="GO:0030424">
    <property type="term" value="C:axon"/>
    <property type="evidence" value="ECO:0000314"/>
    <property type="project" value="UniProtKB"/>
</dbReference>
<dbReference type="GO" id="GO:0044300">
    <property type="term" value="C:cerebellar mossy fiber"/>
    <property type="evidence" value="ECO:0000314"/>
    <property type="project" value="UniProtKB"/>
</dbReference>
<dbReference type="GO" id="GO:0044301">
    <property type="term" value="C:climbing fiber"/>
    <property type="evidence" value="ECO:0000314"/>
    <property type="project" value="UniProtKB"/>
</dbReference>
<dbReference type="GO" id="GO:0005737">
    <property type="term" value="C:cytoplasm"/>
    <property type="evidence" value="ECO:0000314"/>
    <property type="project" value="UniProtKB"/>
</dbReference>
<dbReference type="GO" id="GO:0030425">
    <property type="term" value="C:dendrite"/>
    <property type="evidence" value="ECO:0007669"/>
    <property type="project" value="UniProtKB-SubCell"/>
</dbReference>
<dbReference type="GO" id="GO:0030139">
    <property type="term" value="C:endocytic vesicle"/>
    <property type="evidence" value="ECO:0000250"/>
    <property type="project" value="UniProtKB"/>
</dbReference>
<dbReference type="GO" id="GO:0043025">
    <property type="term" value="C:neuronal cell body"/>
    <property type="evidence" value="ECO:0000314"/>
    <property type="project" value="UniProtKB"/>
</dbReference>
<dbReference type="GO" id="GO:0032809">
    <property type="term" value="C:neuronal cell body membrane"/>
    <property type="evidence" value="ECO:0000314"/>
    <property type="project" value="UniProtKB"/>
</dbReference>
<dbReference type="GO" id="GO:1990032">
    <property type="term" value="C:parallel fiber"/>
    <property type="evidence" value="ECO:0000314"/>
    <property type="project" value="UniProtKB"/>
</dbReference>
<dbReference type="GO" id="GO:0005886">
    <property type="term" value="C:plasma membrane"/>
    <property type="evidence" value="ECO:0000314"/>
    <property type="project" value="UniProtKB"/>
</dbReference>
<dbReference type="GO" id="GO:0071889">
    <property type="term" value="F:14-3-3 protein binding"/>
    <property type="evidence" value="ECO:0007669"/>
    <property type="project" value="Ensembl"/>
</dbReference>
<dbReference type="GO" id="GO:0005123">
    <property type="term" value="F:death receptor binding"/>
    <property type="evidence" value="ECO:0007669"/>
    <property type="project" value="Ensembl"/>
</dbReference>
<dbReference type="GO" id="GO:0005096">
    <property type="term" value="F:GTPase activator activity"/>
    <property type="evidence" value="ECO:0007669"/>
    <property type="project" value="UniProtKB-KW"/>
</dbReference>
<dbReference type="GO" id="GO:0031434">
    <property type="term" value="F:mitogen-activated protein kinase kinase binding"/>
    <property type="evidence" value="ECO:0007669"/>
    <property type="project" value="Ensembl"/>
</dbReference>
<dbReference type="GO" id="GO:0031435">
    <property type="term" value="F:mitogen-activated protein kinase kinase kinase binding"/>
    <property type="evidence" value="ECO:0007669"/>
    <property type="project" value="Ensembl"/>
</dbReference>
<dbReference type="GO" id="GO:0043548">
    <property type="term" value="F:phosphatidylinositol 3-kinase binding"/>
    <property type="evidence" value="ECO:0000250"/>
    <property type="project" value="UniProtKB"/>
</dbReference>
<dbReference type="GO" id="GO:0036312">
    <property type="term" value="F:phosphatidylinositol 3-kinase regulatory subunit binding"/>
    <property type="evidence" value="ECO:0000250"/>
    <property type="project" value="UniProtKB"/>
</dbReference>
<dbReference type="GO" id="GO:0032266">
    <property type="term" value="F:phosphatidylinositol-3-phosphate binding"/>
    <property type="evidence" value="ECO:0000250"/>
    <property type="project" value="UniProtKB"/>
</dbReference>
<dbReference type="GO" id="GO:0070273">
    <property type="term" value="F:phosphatidylinositol-4-phosphate binding"/>
    <property type="evidence" value="ECO:0000250"/>
    <property type="project" value="UniProtKB"/>
</dbReference>
<dbReference type="GO" id="GO:0042803">
    <property type="term" value="F:protein homodimerization activity"/>
    <property type="evidence" value="ECO:0007669"/>
    <property type="project" value="Ensembl"/>
</dbReference>
<dbReference type="GO" id="GO:0019901">
    <property type="term" value="F:protein kinase binding"/>
    <property type="evidence" value="ECO:0000353"/>
    <property type="project" value="ParkinsonsUK-UCL"/>
</dbReference>
<dbReference type="GO" id="GO:0051721">
    <property type="term" value="F:protein phosphatase 2A binding"/>
    <property type="evidence" value="ECO:0007669"/>
    <property type="project" value="Ensembl"/>
</dbReference>
<dbReference type="GO" id="GO:0043539">
    <property type="term" value="F:protein serine/threonine kinase activator activity"/>
    <property type="evidence" value="ECO:0000250"/>
    <property type="project" value="UniProtKB"/>
</dbReference>
<dbReference type="GO" id="GO:0044877">
    <property type="term" value="F:protein-containing complex binding"/>
    <property type="evidence" value="ECO:0000250"/>
    <property type="project" value="UniProtKB"/>
</dbReference>
<dbReference type="GO" id="GO:0017124">
    <property type="term" value="F:SH3 domain binding"/>
    <property type="evidence" value="ECO:0000250"/>
    <property type="project" value="UniProtKB"/>
</dbReference>
<dbReference type="GO" id="GO:0035591">
    <property type="term" value="F:signaling adaptor activity"/>
    <property type="evidence" value="ECO:0007669"/>
    <property type="project" value="Ensembl"/>
</dbReference>
<dbReference type="GO" id="GO:0043184">
    <property type="term" value="F:vascular endothelial growth factor receptor 2 binding"/>
    <property type="evidence" value="ECO:0007669"/>
    <property type="project" value="Ensembl"/>
</dbReference>
<dbReference type="GO" id="GO:0001525">
    <property type="term" value="P:angiogenesis"/>
    <property type="evidence" value="ECO:0007669"/>
    <property type="project" value="UniProtKB-KW"/>
</dbReference>
<dbReference type="GO" id="GO:0021814">
    <property type="term" value="P:cell motility involved in cerebral cortex radial glia guided migration"/>
    <property type="evidence" value="ECO:0000315"/>
    <property type="project" value="UniProtKB"/>
</dbReference>
<dbReference type="GO" id="GO:0071347">
    <property type="term" value="P:cellular response to interleukin-1"/>
    <property type="evidence" value="ECO:0000314"/>
    <property type="project" value="UniProtKB"/>
</dbReference>
<dbReference type="GO" id="GO:0071222">
    <property type="term" value="P:cellular response to lipopolysaccharide"/>
    <property type="evidence" value="ECO:0000314"/>
    <property type="project" value="UniProtKB"/>
</dbReference>
<dbReference type="GO" id="GO:0071356">
    <property type="term" value="P:cellular response to tumor necrosis factor"/>
    <property type="evidence" value="ECO:0000315"/>
    <property type="project" value="BHF-UCL"/>
</dbReference>
<dbReference type="GO" id="GO:0035924">
    <property type="term" value="P:cellular response to vascular endothelial growth factor stimulus"/>
    <property type="evidence" value="ECO:0000314"/>
    <property type="project" value="UniProtKB"/>
</dbReference>
<dbReference type="GO" id="GO:0008625">
    <property type="term" value="P:extrinsic apoptotic signaling pathway via death domain receptors"/>
    <property type="evidence" value="ECO:0007669"/>
    <property type="project" value="Ensembl"/>
</dbReference>
<dbReference type="GO" id="GO:0006954">
    <property type="term" value="P:inflammatory response"/>
    <property type="evidence" value="ECO:0007669"/>
    <property type="project" value="UniProtKB-KW"/>
</dbReference>
<dbReference type="GO" id="GO:0045087">
    <property type="term" value="P:innate immune response"/>
    <property type="evidence" value="ECO:0007669"/>
    <property type="project" value="UniProtKB-KW"/>
</dbReference>
<dbReference type="GO" id="GO:0070059">
    <property type="term" value="P:intrinsic apoptotic signaling pathway in response to endoplasmic reticulum stress"/>
    <property type="evidence" value="ECO:0000315"/>
    <property type="project" value="BHF-UCL"/>
</dbReference>
<dbReference type="GO" id="GO:0021819">
    <property type="term" value="P:layer formation in cerebral cortex"/>
    <property type="evidence" value="ECO:0000315"/>
    <property type="project" value="UniProtKB"/>
</dbReference>
<dbReference type="GO" id="GO:0016525">
    <property type="term" value="P:negative regulation of angiogenesis"/>
    <property type="evidence" value="ECO:0000315"/>
    <property type="project" value="UniProtKB"/>
</dbReference>
<dbReference type="GO" id="GO:0043124">
    <property type="term" value="P:negative regulation of canonical NF-kappaB signal transduction"/>
    <property type="evidence" value="ECO:0000250"/>
    <property type="project" value="UniProtKB"/>
</dbReference>
<dbReference type="GO" id="GO:0090090">
    <property type="term" value="P:negative regulation of canonical Wnt signaling pathway"/>
    <property type="evidence" value="ECO:0000315"/>
    <property type="project" value="BHF-UCL"/>
</dbReference>
<dbReference type="GO" id="GO:0008285">
    <property type="term" value="P:negative regulation of cell population proliferation"/>
    <property type="evidence" value="ECO:0000250"/>
    <property type="project" value="UniProtKB"/>
</dbReference>
<dbReference type="GO" id="GO:0045892">
    <property type="term" value="P:negative regulation of DNA-templated transcription"/>
    <property type="evidence" value="ECO:0000250"/>
    <property type="project" value="UniProtKB"/>
</dbReference>
<dbReference type="GO" id="GO:0010596">
    <property type="term" value="P:negative regulation of endothelial cell migration"/>
    <property type="evidence" value="ECO:0000315"/>
    <property type="project" value="UniProtKB"/>
</dbReference>
<dbReference type="GO" id="GO:0010633">
    <property type="term" value="P:negative regulation of epithelial cell migration"/>
    <property type="evidence" value="ECO:0000250"/>
    <property type="project" value="UniProtKB"/>
</dbReference>
<dbReference type="GO" id="GO:0050680">
    <property type="term" value="P:negative regulation of epithelial cell proliferation"/>
    <property type="evidence" value="ECO:0000250"/>
    <property type="project" value="UniProtKB"/>
</dbReference>
<dbReference type="GO" id="GO:0010719">
    <property type="term" value="P:negative regulation of epithelial to mesenchymal transition"/>
    <property type="evidence" value="ECO:0000250"/>
    <property type="project" value="UniProtKB"/>
</dbReference>
<dbReference type="GO" id="GO:0070373">
    <property type="term" value="P:negative regulation of ERK1 and ERK2 cascade"/>
    <property type="evidence" value="ECO:0000250"/>
    <property type="project" value="UniProtKB"/>
</dbReference>
<dbReference type="GO" id="GO:0048147">
    <property type="term" value="P:negative regulation of fibroblast proliferation"/>
    <property type="evidence" value="ECO:0000315"/>
    <property type="project" value="BHF-UCL"/>
</dbReference>
<dbReference type="GO" id="GO:0070317">
    <property type="term" value="P:negative regulation of G0 to G1 transition"/>
    <property type="evidence" value="ECO:0000250"/>
    <property type="project" value="UniProtKB"/>
</dbReference>
<dbReference type="GO" id="GO:0034260">
    <property type="term" value="P:negative regulation of GTPase activity"/>
    <property type="evidence" value="ECO:0000315"/>
    <property type="project" value="UniProtKB"/>
</dbReference>
<dbReference type="GO" id="GO:0043409">
    <property type="term" value="P:negative regulation of MAPK cascade"/>
    <property type="evidence" value="ECO:0000250"/>
    <property type="project" value="UniProtKB"/>
</dbReference>
<dbReference type="GO" id="GO:0051898">
    <property type="term" value="P:negative regulation of phosphatidylinositol 3-kinase/protein kinase B signal transduction"/>
    <property type="evidence" value="ECO:0000250"/>
    <property type="project" value="UniProtKB"/>
</dbReference>
<dbReference type="GO" id="GO:0042177">
    <property type="term" value="P:negative regulation of protein catabolic process"/>
    <property type="evidence" value="ECO:0000250"/>
    <property type="project" value="UniProtKB"/>
</dbReference>
<dbReference type="GO" id="GO:0034144">
    <property type="term" value="P:negative regulation of toll-like receptor 4 signaling pathway"/>
    <property type="evidence" value="ECO:0000250"/>
    <property type="project" value="UniProtKB"/>
</dbReference>
<dbReference type="GO" id="GO:0000122">
    <property type="term" value="P:negative regulation of transcription by RNA polymerase II"/>
    <property type="evidence" value="ECO:0000250"/>
    <property type="project" value="UniProtKB"/>
</dbReference>
<dbReference type="GO" id="GO:0030948">
    <property type="term" value="P:negative regulation of vascular endothelial growth factor receptor signaling pathway"/>
    <property type="evidence" value="ECO:0000315"/>
    <property type="project" value="UniProtKB"/>
</dbReference>
<dbReference type="GO" id="GO:1900747">
    <property type="term" value="P:negative regulation of vascular endothelial growth factor signaling pathway"/>
    <property type="evidence" value="ECO:0000314"/>
    <property type="project" value="UniProtKB"/>
</dbReference>
<dbReference type="GO" id="GO:0048812">
    <property type="term" value="P:neuron projection morphogenesis"/>
    <property type="evidence" value="ECO:0000315"/>
    <property type="project" value="UniProtKB"/>
</dbReference>
<dbReference type="GO" id="GO:0043065">
    <property type="term" value="P:positive regulation of apoptotic process"/>
    <property type="evidence" value="ECO:0000315"/>
    <property type="project" value="BHF-UCL"/>
</dbReference>
<dbReference type="GO" id="GO:2001235">
    <property type="term" value="P:positive regulation of apoptotic signaling pathway"/>
    <property type="evidence" value="ECO:0000250"/>
    <property type="project" value="UniProtKB"/>
</dbReference>
<dbReference type="GO" id="GO:0043123">
    <property type="term" value="P:positive regulation of canonical NF-kappaB signal transduction"/>
    <property type="evidence" value="ECO:0000315"/>
    <property type="project" value="UniProtKB"/>
</dbReference>
<dbReference type="GO" id="GO:1900006">
    <property type="term" value="P:positive regulation of dendrite development"/>
    <property type="evidence" value="ECO:0000315"/>
    <property type="project" value="UniProtKB"/>
</dbReference>
<dbReference type="GO" id="GO:0050679">
    <property type="term" value="P:positive regulation of epithelial cell proliferation"/>
    <property type="evidence" value="ECO:0000250"/>
    <property type="project" value="UniProtKB"/>
</dbReference>
<dbReference type="GO" id="GO:0046330">
    <property type="term" value="P:positive regulation of JNK cascade"/>
    <property type="evidence" value="ECO:0000315"/>
    <property type="project" value="BHF-UCL"/>
</dbReference>
<dbReference type="GO" id="GO:0043410">
    <property type="term" value="P:positive regulation of MAPK cascade"/>
    <property type="evidence" value="ECO:0000250"/>
    <property type="project" value="UniProtKB"/>
</dbReference>
<dbReference type="GO" id="GO:2001224">
    <property type="term" value="P:positive regulation of neuron migration"/>
    <property type="evidence" value="ECO:0000315"/>
    <property type="project" value="UniProtKB"/>
</dbReference>
<dbReference type="GO" id="GO:0010976">
    <property type="term" value="P:positive regulation of neuron projection development"/>
    <property type="evidence" value="ECO:0000315"/>
    <property type="project" value="UniProtKB"/>
</dbReference>
<dbReference type="GO" id="GO:1901800">
    <property type="term" value="P:positive regulation of proteasomal protein catabolic process"/>
    <property type="evidence" value="ECO:0000250"/>
    <property type="project" value="UniProtKB"/>
</dbReference>
<dbReference type="GO" id="GO:0045732">
    <property type="term" value="P:positive regulation of protein catabolic process"/>
    <property type="evidence" value="ECO:0000315"/>
    <property type="project" value="UniProtKB"/>
</dbReference>
<dbReference type="GO" id="GO:0031334">
    <property type="term" value="P:positive regulation of protein-containing complex assembly"/>
    <property type="evidence" value="ECO:0007669"/>
    <property type="project" value="Ensembl"/>
</dbReference>
<dbReference type="GO" id="GO:0090129">
    <property type="term" value="P:positive regulation of synapse maturation"/>
    <property type="evidence" value="ECO:0000315"/>
    <property type="project" value="UniProtKB"/>
</dbReference>
<dbReference type="GO" id="GO:0045944">
    <property type="term" value="P:positive regulation of transcription by RNA polymerase II"/>
    <property type="evidence" value="ECO:0000250"/>
    <property type="project" value="UniProtKB"/>
</dbReference>
<dbReference type="GO" id="GO:0030163">
    <property type="term" value="P:protein catabolic process"/>
    <property type="evidence" value="ECO:0000250"/>
    <property type="project" value="UniProtKB"/>
</dbReference>
<dbReference type="GO" id="GO:0043122">
    <property type="term" value="P:regulation of canonical NF-kappaB signal transduction"/>
    <property type="evidence" value="ECO:0000315"/>
    <property type="project" value="UniProtKB"/>
</dbReference>
<dbReference type="GO" id="GO:0051726">
    <property type="term" value="P:regulation of cell cycle"/>
    <property type="evidence" value="ECO:0000250"/>
    <property type="project" value="UniProtKB"/>
</dbReference>
<dbReference type="GO" id="GO:0043087">
    <property type="term" value="P:regulation of GTPase activity"/>
    <property type="evidence" value="ECO:0000315"/>
    <property type="project" value="UniProtKB"/>
</dbReference>
<dbReference type="GO" id="GO:1900744">
    <property type="term" value="P:regulation of p38MAPK cascade"/>
    <property type="evidence" value="ECO:0000315"/>
    <property type="project" value="UniProtKB"/>
</dbReference>
<dbReference type="GO" id="GO:0043254">
    <property type="term" value="P:regulation of protein-containing complex assembly"/>
    <property type="evidence" value="ECO:0000315"/>
    <property type="project" value="UniProtKB"/>
</dbReference>
<dbReference type="GO" id="GO:0006986">
    <property type="term" value="P:response to unfolded protein"/>
    <property type="evidence" value="ECO:0007669"/>
    <property type="project" value="UniProtKB-KW"/>
</dbReference>
<dbReference type="GO" id="GO:0035148">
    <property type="term" value="P:tube formation"/>
    <property type="evidence" value="ECO:0000315"/>
    <property type="project" value="UniProtKB"/>
</dbReference>
<dbReference type="GO" id="GO:0033209">
    <property type="term" value="P:tumor necrosis factor-mediated signaling pathway"/>
    <property type="evidence" value="ECO:0007669"/>
    <property type="project" value="Ensembl"/>
</dbReference>
<dbReference type="GO" id="GO:0036324">
    <property type="term" value="P:vascular endothelial growth factor receptor-2 signaling pathway"/>
    <property type="evidence" value="ECO:0000315"/>
    <property type="project" value="UniProtKB"/>
</dbReference>
<dbReference type="CDD" id="cd04013">
    <property type="entry name" value="C2_SynGAP_like"/>
    <property type="match status" value="1"/>
</dbReference>
<dbReference type="CDD" id="cd05136">
    <property type="entry name" value="RasGAP_DAB2IP"/>
    <property type="match status" value="1"/>
</dbReference>
<dbReference type="FunFam" id="1.10.506.10:FF:000001">
    <property type="entry name" value="Ras GTPase-activating protein nGAP isoform 2"/>
    <property type="match status" value="1"/>
</dbReference>
<dbReference type="FunFam" id="2.60.40.150:FF:000010">
    <property type="entry name" value="Ras GTPase-activating protein nGAP isoform 2"/>
    <property type="match status" value="1"/>
</dbReference>
<dbReference type="Gene3D" id="2.60.40.150">
    <property type="entry name" value="C2 domain"/>
    <property type="match status" value="1"/>
</dbReference>
<dbReference type="Gene3D" id="1.10.506.10">
    <property type="entry name" value="GTPase Activation - p120gap, domain 1"/>
    <property type="match status" value="2"/>
</dbReference>
<dbReference type="Gene3D" id="2.30.29.30">
    <property type="entry name" value="Pleckstrin-homology domain (PH domain)/Phosphotyrosine-binding domain (PTB)"/>
    <property type="match status" value="1"/>
</dbReference>
<dbReference type="InterPro" id="IPR000008">
    <property type="entry name" value="C2_dom"/>
</dbReference>
<dbReference type="InterPro" id="IPR035892">
    <property type="entry name" value="C2_domain_sf"/>
</dbReference>
<dbReference type="InterPro" id="IPR021887">
    <property type="entry name" value="DAB2P_C"/>
</dbReference>
<dbReference type="InterPro" id="IPR011993">
    <property type="entry name" value="PH-like_dom_sf"/>
</dbReference>
<dbReference type="InterPro" id="IPR001849">
    <property type="entry name" value="PH_domain"/>
</dbReference>
<dbReference type="InterPro" id="IPR039360">
    <property type="entry name" value="Ras_GTPase"/>
</dbReference>
<dbReference type="InterPro" id="IPR023152">
    <property type="entry name" value="RasGAP_CS"/>
</dbReference>
<dbReference type="InterPro" id="IPR001936">
    <property type="entry name" value="RasGAP_dom"/>
</dbReference>
<dbReference type="InterPro" id="IPR008936">
    <property type="entry name" value="Rho_GTPase_activation_prot"/>
</dbReference>
<dbReference type="PANTHER" id="PTHR10194:SF26">
    <property type="entry name" value="DISABLED HOMOLOG 2-INTERACTING PROTEIN"/>
    <property type="match status" value="1"/>
</dbReference>
<dbReference type="PANTHER" id="PTHR10194">
    <property type="entry name" value="RAS GTPASE-ACTIVATING PROTEINS"/>
    <property type="match status" value="1"/>
</dbReference>
<dbReference type="Pfam" id="PF00168">
    <property type="entry name" value="C2"/>
    <property type="match status" value="1"/>
</dbReference>
<dbReference type="Pfam" id="PF12004">
    <property type="entry name" value="DAB2P_C"/>
    <property type="match status" value="1"/>
</dbReference>
<dbReference type="Pfam" id="PF25321">
    <property type="entry name" value="PH_RASGAP"/>
    <property type="match status" value="1"/>
</dbReference>
<dbReference type="Pfam" id="PF00616">
    <property type="entry name" value="RasGAP"/>
    <property type="match status" value="2"/>
</dbReference>
<dbReference type="SMART" id="SM00239">
    <property type="entry name" value="C2"/>
    <property type="match status" value="1"/>
</dbReference>
<dbReference type="SMART" id="SM00233">
    <property type="entry name" value="PH"/>
    <property type="match status" value="1"/>
</dbReference>
<dbReference type="SMART" id="SM00323">
    <property type="entry name" value="RasGAP"/>
    <property type="match status" value="1"/>
</dbReference>
<dbReference type="SUPFAM" id="SSF49562">
    <property type="entry name" value="C2 domain (Calcium/lipid-binding domain, CaLB)"/>
    <property type="match status" value="1"/>
</dbReference>
<dbReference type="SUPFAM" id="SSF48350">
    <property type="entry name" value="GTPase activation domain, GAP"/>
    <property type="match status" value="1"/>
</dbReference>
<dbReference type="SUPFAM" id="SSF50729">
    <property type="entry name" value="PH domain-like"/>
    <property type="match status" value="1"/>
</dbReference>
<dbReference type="PROSITE" id="PS50004">
    <property type="entry name" value="C2"/>
    <property type="match status" value="1"/>
</dbReference>
<dbReference type="PROSITE" id="PS50003">
    <property type="entry name" value="PH_DOMAIN"/>
    <property type="match status" value="1"/>
</dbReference>
<dbReference type="PROSITE" id="PS00509">
    <property type="entry name" value="RAS_GTPASE_ACTIV_1"/>
    <property type="match status" value="1"/>
</dbReference>
<dbReference type="PROSITE" id="PS50018">
    <property type="entry name" value="RAS_GTPASE_ACTIV_2"/>
    <property type="match status" value="1"/>
</dbReference>
<feature type="chain" id="PRO_0000252408" description="Disabled homolog 2-interacting protein">
    <location>
        <begin position="1"/>
        <end position="1189"/>
    </location>
</feature>
<feature type="domain" description="PH" evidence="5">
    <location>
        <begin position="101"/>
        <end position="202"/>
    </location>
</feature>
<feature type="domain" description="C2" evidence="4">
    <location>
        <begin position="193"/>
        <end position="311"/>
    </location>
</feature>
<feature type="domain" description="Ras-GAP" evidence="6">
    <location>
        <begin position="387"/>
        <end position="595"/>
    </location>
</feature>
<feature type="region of interest" description="Disordered" evidence="7">
    <location>
        <begin position="1"/>
        <end position="75"/>
    </location>
</feature>
<feature type="region of interest" description="Necessary for interaction with AKT1" evidence="1">
    <location>
        <begin position="646"/>
        <end position="943"/>
    </location>
</feature>
<feature type="region of interest" description="Disordered" evidence="7">
    <location>
        <begin position="653"/>
        <end position="679"/>
    </location>
</feature>
<feature type="region of interest" description="Disordered" evidence="7">
    <location>
        <begin position="715"/>
        <end position="738"/>
    </location>
</feature>
<feature type="region of interest" description="Disordered" evidence="7">
    <location>
        <begin position="804"/>
        <end position="823"/>
    </location>
</feature>
<feature type="region of interest" description="Disordered" evidence="7">
    <location>
        <begin position="843"/>
        <end position="865"/>
    </location>
</feature>
<feature type="region of interest" description="Disordered" evidence="7">
    <location>
        <begin position="895"/>
        <end position="998"/>
    </location>
</feature>
<feature type="region of interest" description="Disordered" evidence="7">
    <location>
        <begin position="1015"/>
        <end position="1034"/>
    </location>
</feature>
<feature type="region of interest" description="Disordered" evidence="7">
    <location>
        <begin position="1163"/>
        <end position="1189"/>
    </location>
</feature>
<feature type="coiled-coil region" evidence="3">
    <location>
        <begin position="1025"/>
        <end position="1159"/>
    </location>
</feature>
<feature type="compositionally biased region" description="Basic residues" evidence="7">
    <location>
        <begin position="20"/>
        <end position="38"/>
    </location>
</feature>
<feature type="compositionally biased region" description="Basic and acidic residues" evidence="7">
    <location>
        <begin position="39"/>
        <end position="49"/>
    </location>
</feature>
<feature type="compositionally biased region" description="Polar residues" evidence="7">
    <location>
        <begin position="59"/>
        <end position="73"/>
    </location>
</feature>
<feature type="compositionally biased region" description="Polar residues" evidence="7">
    <location>
        <begin position="653"/>
        <end position="668"/>
    </location>
</feature>
<feature type="compositionally biased region" description="Low complexity" evidence="7">
    <location>
        <begin position="669"/>
        <end position="679"/>
    </location>
</feature>
<feature type="compositionally biased region" description="Polar residues" evidence="7">
    <location>
        <begin position="715"/>
        <end position="731"/>
    </location>
</feature>
<feature type="compositionally biased region" description="Low complexity" evidence="7">
    <location>
        <begin position="852"/>
        <end position="865"/>
    </location>
</feature>
<feature type="compositionally biased region" description="Pro residues" evidence="7">
    <location>
        <begin position="919"/>
        <end position="931"/>
    </location>
</feature>
<feature type="compositionally biased region" description="Polar residues" evidence="7">
    <location>
        <begin position="939"/>
        <end position="955"/>
    </location>
</feature>
<feature type="compositionally biased region" description="Polar residues" evidence="7">
    <location>
        <begin position="967"/>
        <end position="976"/>
    </location>
</feature>
<feature type="compositionally biased region" description="Basic and acidic residues" evidence="7">
    <location>
        <begin position="1023"/>
        <end position="1034"/>
    </location>
</feature>
<feature type="site" description="Arginine finger; crucial for GTP hydrolysis by stabilizing the transition state" evidence="6">
    <location>
        <position position="413"/>
    </location>
</feature>
<feature type="modified residue" description="Phosphoserine; by MAP3K5 and RIPK1" evidence="2">
    <location>
        <position position="728"/>
    </location>
</feature>
<feature type="modified residue" description="Phosphoserine" evidence="27">
    <location>
        <position position="747"/>
    </location>
</feature>
<feature type="modified residue" description="Phosphoserine" evidence="2">
    <location>
        <position position="978"/>
    </location>
</feature>
<feature type="modified residue" description="Phosphoserine" evidence="2">
    <location>
        <position position="995"/>
    </location>
</feature>
<feature type="splice variant" id="VSP_020956" description="In isoform 2." evidence="22 23 24">
    <location>
        <begin position="1"/>
        <end position="124"/>
    </location>
</feature>
<feature type="splice variant" id="VSP_046519" description="In isoform 4." evidence="21 25">
    <original>MSAGGNARKSTGRPSYYYRLLRRPRLQRQRSRSRSRTRPARE</original>
    <variation>MEPDSLLDPGDSYE</variation>
    <location>
        <begin position="1"/>
        <end position="42"/>
    </location>
</feature>
<feature type="splice variant" id="VSP_020957" description="In isoform 3." evidence="20">
    <location>
        <begin position="990"/>
        <end position="1040"/>
    </location>
</feature>
<feature type="splice variant" id="VSP_046520" description="In isoform 4." evidence="21 25">
    <original>ERYSMQARNGVSPTNPTKLQITENGEFRNSSNC</original>
    <variation>ESMH</variation>
    <location>
        <begin position="1157"/>
        <end position="1189"/>
    </location>
</feature>
<feature type="sequence conflict" description="In Ref. 2; ABF13290." evidence="26" ref="2">
    <original>K</original>
    <variation>E</variation>
    <location>
        <position position="282"/>
    </location>
</feature>
<feature type="sequence conflict" description="In Ref. 2; ABF13290." evidence="26" ref="2">
    <original>I</original>
    <variation>V</variation>
    <location>
        <position position="517"/>
    </location>
</feature>
<feature type="sequence conflict" description="In Ref. 2; ABF13290." evidence="26" ref="2">
    <original>E</original>
    <variation>G</variation>
    <location>
        <position position="880"/>
    </location>
</feature>
<feature type="sequence conflict" description="In Ref. 2; ABF13290." evidence="26" ref="2">
    <original>E</original>
    <variation>K</variation>
    <location>
        <position position="1058"/>
    </location>
</feature>
<feature type="sequence conflict" description="In Ref. 2; ABF13290." evidence="26" ref="2">
    <original>S</original>
    <variation>P</variation>
    <location>
        <position position="1108"/>
    </location>
</feature>